<protein>
    <recommendedName>
        <fullName>Histone chaperone RTT106</fullName>
    </recommendedName>
</protein>
<feature type="chain" id="PRO_0000320491" description="Histone chaperone RTT106">
    <location>
        <begin position="1"/>
        <end position="482"/>
    </location>
</feature>
<feature type="region of interest" description="Disordered" evidence="2">
    <location>
        <begin position="47"/>
        <end position="75"/>
    </location>
</feature>
<feature type="region of interest" description="Disordered" evidence="2">
    <location>
        <begin position="390"/>
        <end position="482"/>
    </location>
</feature>
<feature type="compositionally biased region" description="Basic and acidic residues" evidence="2">
    <location>
        <begin position="47"/>
        <end position="66"/>
    </location>
</feature>
<feature type="compositionally biased region" description="Low complexity" evidence="2">
    <location>
        <begin position="398"/>
        <end position="407"/>
    </location>
</feature>
<feature type="compositionally biased region" description="Acidic residues" evidence="2">
    <location>
        <begin position="408"/>
        <end position="435"/>
    </location>
</feature>
<feature type="compositionally biased region" description="Acidic residues" evidence="2">
    <location>
        <begin position="442"/>
        <end position="455"/>
    </location>
</feature>
<proteinExistence type="inferred from homology"/>
<organism>
    <name type="scientific">Debaryomyces hansenii (strain ATCC 36239 / CBS 767 / BCRC 21394 / JCM 1990 / NBRC 0083 / IGC 2968)</name>
    <name type="common">Yeast</name>
    <name type="synonym">Torulaspora hansenii</name>
    <dbReference type="NCBI Taxonomy" id="284592"/>
    <lineage>
        <taxon>Eukaryota</taxon>
        <taxon>Fungi</taxon>
        <taxon>Dikarya</taxon>
        <taxon>Ascomycota</taxon>
        <taxon>Saccharomycotina</taxon>
        <taxon>Pichiomycetes</taxon>
        <taxon>Debaryomycetaceae</taxon>
        <taxon>Debaryomyces</taxon>
    </lineage>
</organism>
<gene>
    <name type="primary">RTT106</name>
    <name type="ordered locus">DEHA2A07986g</name>
</gene>
<sequence>MSNDQKWIKSLPSDLQNQVNALVEAHPPSLTVIHKLCEYFKTNASEHEDKRRKLSSDPEIKSEGHVPEALSGPKSEVPGQIHEQEIIFELPQISFQSPIRKKLNLIFHLLVEPGQSPKPVMSLALPTTYVPEISIHNLASSIRLCVLLPILGNSTNNTKRNIGLLCFWIHDDAASDPNKNDPIICQVNFDQVKKQLIKAGKIPAEAETQLKEMNESNQSQDGIKAINEAIINFLQKQFQLCGIHMINYLPSSSATKNKLTINTDAGVAVSSNANSVNDLVMVEAYKGARDGAVLMLTANEYNQPYIIFGFKKPILIFDISKVQHVSYSNITRLTYSMIVTVVNEKKDSKVETLEFGMIDQKYFQIMDEFIKSQGINDNSFDEDLREKVTTNANSGEGEQASEQAAPADSDDEEEDGTFQVGQEEEGESSVDEEYDSNAGSDGDSDVGEEEDDTNENNEGANPAASTEADDVVTQSKEEDDEQ</sequence>
<name>RT106_DEBHA</name>
<comment type="function">
    <text evidence="1">Histones H3 and H4 chaperone involved in the nucleosome formation and heterochromatin silencing. Required for the deposition of H3K56ac-carrying H3-H4 complex onto newly-replicated DNA. Plays a role in the transcriptional regulation of the cell-cycle dependent histone genes by creating a repressive structure at the core histone gene promoter (By similarity).</text>
</comment>
<comment type="subunit">
    <text evidence="1">Interacts with histones H3 and H4.</text>
</comment>
<comment type="subcellular location">
    <subcellularLocation>
        <location evidence="1">Nucleus</location>
    </subcellularLocation>
    <subcellularLocation>
        <location evidence="1">Chromosome</location>
    </subcellularLocation>
</comment>
<comment type="similarity">
    <text evidence="3">Belongs to the RTT106 family.</text>
</comment>
<evidence type="ECO:0000250" key="1"/>
<evidence type="ECO:0000256" key="2">
    <source>
        <dbReference type="SAM" id="MobiDB-lite"/>
    </source>
</evidence>
<evidence type="ECO:0000305" key="3"/>
<keyword id="KW-0143">Chaperone</keyword>
<keyword id="KW-0158">Chromosome</keyword>
<keyword id="KW-0238">DNA-binding</keyword>
<keyword id="KW-0539">Nucleus</keyword>
<keyword id="KW-1185">Reference proteome</keyword>
<keyword id="KW-0804">Transcription</keyword>
<keyword id="KW-0805">Transcription regulation</keyword>
<dbReference type="EMBL" id="CR382133">
    <property type="protein sequence ID" value="CAG84633.2"/>
    <property type="molecule type" value="Genomic_DNA"/>
</dbReference>
<dbReference type="RefSeq" id="XP_456677.2">
    <property type="nucleotide sequence ID" value="XM_456677.1"/>
</dbReference>
<dbReference type="SMR" id="Q6BYP2"/>
<dbReference type="FunCoup" id="Q6BYP2">
    <property type="interactions" value="145"/>
</dbReference>
<dbReference type="STRING" id="284592.Q6BYP2"/>
<dbReference type="GeneID" id="2899653"/>
<dbReference type="KEGG" id="dha:DEHA2A07986g"/>
<dbReference type="VEuPathDB" id="FungiDB:DEHA2A07986g"/>
<dbReference type="eggNOG" id="ENOG502R9PE">
    <property type="taxonomic scope" value="Eukaryota"/>
</dbReference>
<dbReference type="HOGENOM" id="CLU_040939_0_0_1"/>
<dbReference type="InParanoid" id="Q6BYP2"/>
<dbReference type="OMA" id="TRLTFNV"/>
<dbReference type="OrthoDB" id="75754at2759"/>
<dbReference type="Proteomes" id="UP000000599">
    <property type="component" value="Chromosome A"/>
</dbReference>
<dbReference type="GO" id="GO:0005694">
    <property type="term" value="C:chromosome"/>
    <property type="evidence" value="ECO:0007669"/>
    <property type="project" value="UniProtKB-SubCell"/>
</dbReference>
<dbReference type="GO" id="GO:0005634">
    <property type="term" value="C:nucleus"/>
    <property type="evidence" value="ECO:0007669"/>
    <property type="project" value="UniProtKB-SubCell"/>
</dbReference>
<dbReference type="GO" id="GO:0003677">
    <property type="term" value="F:DNA binding"/>
    <property type="evidence" value="ECO:0007669"/>
    <property type="project" value="UniProtKB-KW"/>
</dbReference>
<dbReference type="GO" id="GO:0042393">
    <property type="term" value="F:histone binding"/>
    <property type="evidence" value="ECO:0007669"/>
    <property type="project" value="TreeGrafter"/>
</dbReference>
<dbReference type="GO" id="GO:0031491">
    <property type="term" value="F:nucleosome binding"/>
    <property type="evidence" value="ECO:0007669"/>
    <property type="project" value="TreeGrafter"/>
</dbReference>
<dbReference type="CDD" id="cd13304">
    <property type="entry name" value="PH2-like_Rtt106"/>
    <property type="match status" value="1"/>
</dbReference>
<dbReference type="Gene3D" id="2.30.29.120">
    <property type="match status" value="1"/>
</dbReference>
<dbReference type="Gene3D" id="2.30.29.30">
    <property type="entry name" value="Pleckstrin-homology domain (PH domain)/Phosphotyrosine-binding domain (PTB)"/>
    <property type="match status" value="1"/>
</dbReference>
<dbReference type="InterPro" id="IPR011993">
    <property type="entry name" value="PH-like_dom_sf"/>
</dbReference>
<dbReference type="InterPro" id="IPR013719">
    <property type="entry name" value="RTT106/SPT16-like_middle_dom"/>
</dbReference>
<dbReference type="InterPro" id="IPR050454">
    <property type="entry name" value="RTT106/SSRP1_HistChap/FACT"/>
</dbReference>
<dbReference type="InterPro" id="IPR040770">
    <property type="entry name" value="Rtt106_PH"/>
</dbReference>
<dbReference type="PANTHER" id="PTHR45849">
    <property type="entry name" value="FACT COMPLEX SUBUNIT SSRP1"/>
    <property type="match status" value="1"/>
</dbReference>
<dbReference type="PANTHER" id="PTHR45849:SF3">
    <property type="entry name" value="HISTONE CHAPERONE RTT106"/>
    <property type="match status" value="1"/>
</dbReference>
<dbReference type="Pfam" id="PF18469">
    <property type="entry name" value="PH_18"/>
    <property type="match status" value="1"/>
</dbReference>
<dbReference type="Pfam" id="PF08512">
    <property type="entry name" value="Rttp106-like_middle"/>
    <property type="match status" value="1"/>
</dbReference>
<dbReference type="SMART" id="SM01287">
    <property type="entry name" value="Rtt106"/>
    <property type="match status" value="1"/>
</dbReference>
<dbReference type="SUPFAM" id="SSF50729">
    <property type="entry name" value="PH domain-like"/>
    <property type="match status" value="1"/>
</dbReference>
<reference key="1">
    <citation type="journal article" date="2004" name="Nature">
        <title>Genome evolution in yeasts.</title>
        <authorList>
            <person name="Dujon B."/>
            <person name="Sherman D."/>
            <person name="Fischer G."/>
            <person name="Durrens P."/>
            <person name="Casaregola S."/>
            <person name="Lafontaine I."/>
            <person name="de Montigny J."/>
            <person name="Marck C."/>
            <person name="Neuveglise C."/>
            <person name="Talla E."/>
            <person name="Goffard N."/>
            <person name="Frangeul L."/>
            <person name="Aigle M."/>
            <person name="Anthouard V."/>
            <person name="Babour A."/>
            <person name="Barbe V."/>
            <person name="Barnay S."/>
            <person name="Blanchin S."/>
            <person name="Beckerich J.-M."/>
            <person name="Beyne E."/>
            <person name="Bleykasten C."/>
            <person name="Boisrame A."/>
            <person name="Boyer J."/>
            <person name="Cattolico L."/>
            <person name="Confanioleri F."/>
            <person name="de Daruvar A."/>
            <person name="Despons L."/>
            <person name="Fabre E."/>
            <person name="Fairhead C."/>
            <person name="Ferry-Dumazet H."/>
            <person name="Groppi A."/>
            <person name="Hantraye F."/>
            <person name="Hennequin C."/>
            <person name="Jauniaux N."/>
            <person name="Joyet P."/>
            <person name="Kachouri R."/>
            <person name="Kerrest A."/>
            <person name="Koszul R."/>
            <person name="Lemaire M."/>
            <person name="Lesur I."/>
            <person name="Ma L."/>
            <person name="Muller H."/>
            <person name="Nicaud J.-M."/>
            <person name="Nikolski M."/>
            <person name="Oztas S."/>
            <person name="Ozier-Kalogeropoulos O."/>
            <person name="Pellenz S."/>
            <person name="Potier S."/>
            <person name="Richard G.-F."/>
            <person name="Straub M.-L."/>
            <person name="Suleau A."/>
            <person name="Swennen D."/>
            <person name="Tekaia F."/>
            <person name="Wesolowski-Louvel M."/>
            <person name="Westhof E."/>
            <person name="Wirth B."/>
            <person name="Zeniou-Meyer M."/>
            <person name="Zivanovic Y."/>
            <person name="Bolotin-Fukuhara M."/>
            <person name="Thierry A."/>
            <person name="Bouchier C."/>
            <person name="Caudron B."/>
            <person name="Scarpelli C."/>
            <person name="Gaillardin C."/>
            <person name="Weissenbach J."/>
            <person name="Wincker P."/>
            <person name="Souciet J.-L."/>
        </authorList>
    </citation>
    <scope>NUCLEOTIDE SEQUENCE [LARGE SCALE GENOMIC DNA]</scope>
    <source>
        <strain>ATCC 36239 / CBS 767 / BCRC 21394 / JCM 1990 / NBRC 0083 / IGC 2968</strain>
    </source>
</reference>
<accession>Q6BYP2</accession>